<comment type="similarity">
    <text evidence="1">Belongs to the UPF0223 family.</text>
</comment>
<reference key="1">
    <citation type="journal article" date="2008" name="Antimicrob. Agents Chemother.">
        <title>Mutated response regulator graR is responsible for phenotypic conversion of Staphylococcus aureus from heterogeneous vancomycin-intermediate resistance to vancomycin-intermediate resistance.</title>
        <authorList>
            <person name="Neoh H.-M."/>
            <person name="Cui L."/>
            <person name="Yuzawa H."/>
            <person name="Takeuchi F."/>
            <person name="Matsuo M."/>
            <person name="Hiramatsu K."/>
        </authorList>
    </citation>
    <scope>NUCLEOTIDE SEQUENCE [LARGE SCALE GENOMIC DNA]</scope>
    <source>
        <strain>Mu3 / ATCC 700698</strain>
    </source>
</reference>
<sequence>MEYEYPIDLDWSNEEMISVINFFNHVEKYYESGVTAGDFMGAYKRFKEIVPAKAEEKQIFNTFEKSSGYNSYKAVQDVKTHSEEQRVTAKK</sequence>
<accession>A7X0Z9</accession>
<gene>
    <name type="ordered locus">SAHV_1089</name>
</gene>
<feature type="chain" id="PRO_1000064144" description="UPF0223 protein SAHV_1089">
    <location>
        <begin position="1"/>
        <end position="91"/>
    </location>
</feature>
<dbReference type="EMBL" id="AP009324">
    <property type="protein sequence ID" value="BAF77972.1"/>
    <property type="molecule type" value="Genomic_DNA"/>
</dbReference>
<dbReference type="RefSeq" id="WP_000455597.1">
    <property type="nucleotide sequence ID" value="NZ_CTYB01000001.1"/>
</dbReference>
<dbReference type="SMR" id="A7X0Z9"/>
<dbReference type="KEGG" id="saw:SAHV_1089"/>
<dbReference type="HOGENOM" id="CLU_166693_0_0_9"/>
<dbReference type="Gene3D" id="1.10.220.80">
    <property type="entry name" value="BH2638-like"/>
    <property type="match status" value="1"/>
</dbReference>
<dbReference type="HAMAP" id="MF_01041">
    <property type="entry name" value="UPF0223"/>
    <property type="match status" value="1"/>
</dbReference>
<dbReference type="InterPro" id="IPR023324">
    <property type="entry name" value="BH2638-like_sf"/>
</dbReference>
<dbReference type="InterPro" id="IPR007920">
    <property type="entry name" value="UPF0223"/>
</dbReference>
<dbReference type="NCBIfam" id="NF003353">
    <property type="entry name" value="PRK04387.1"/>
    <property type="match status" value="1"/>
</dbReference>
<dbReference type="Pfam" id="PF05256">
    <property type="entry name" value="UPF0223"/>
    <property type="match status" value="1"/>
</dbReference>
<dbReference type="PIRSF" id="PIRSF037260">
    <property type="entry name" value="UPF0223"/>
    <property type="match status" value="1"/>
</dbReference>
<dbReference type="SUPFAM" id="SSF158504">
    <property type="entry name" value="BH2638-like"/>
    <property type="match status" value="1"/>
</dbReference>
<protein>
    <recommendedName>
        <fullName evidence="1">UPF0223 protein SAHV_1089</fullName>
    </recommendedName>
</protein>
<proteinExistence type="inferred from homology"/>
<evidence type="ECO:0000255" key="1">
    <source>
        <dbReference type="HAMAP-Rule" id="MF_01041"/>
    </source>
</evidence>
<name>Y1089_STAA1</name>
<organism>
    <name type="scientific">Staphylococcus aureus (strain Mu3 / ATCC 700698)</name>
    <dbReference type="NCBI Taxonomy" id="418127"/>
    <lineage>
        <taxon>Bacteria</taxon>
        <taxon>Bacillati</taxon>
        <taxon>Bacillota</taxon>
        <taxon>Bacilli</taxon>
        <taxon>Bacillales</taxon>
        <taxon>Staphylococcaceae</taxon>
        <taxon>Staphylococcus</taxon>
    </lineage>
</organism>